<gene>
    <name evidence="1" type="primary">ndhE</name>
    <name type="ordered locus">MoinCp073</name>
</gene>
<geneLocation type="chloroplast"/>
<protein>
    <recommendedName>
        <fullName evidence="1">NAD(P)H-quinone oxidoreductase subunit 4L, chloroplastic</fullName>
        <ecNumber evidence="1">7.1.1.-</ecNumber>
    </recommendedName>
    <alternativeName>
        <fullName evidence="1">NAD(P)H dehydrogenase subunit 4L</fullName>
    </alternativeName>
    <alternativeName>
        <fullName evidence="1">NADH-plastoquinone oxidoreductase subunit 4L</fullName>
    </alternativeName>
</protein>
<feature type="chain" id="PRO_0000360345" description="NAD(P)H-quinone oxidoreductase subunit 4L, chloroplastic">
    <location>
        <begin position="1"/>
        <end position="101"/>
    </location>
</feature>
<feature type="transmembrane region" description="Helical" evidence="1">
    <location>
        <begin position="2"/>
        <end position="22"/>
    </location>
</feature>
<feature type="transmembrane region" description="Helical" evidence="1">
    <location>
        <begin position="32"/>
        <end position="52"/>
    </location>
</feature>
<feature type="transmembrane region" description="Helical" evidence="1">
    <location>
        <begin position="61"/>
        <end position="81"/>
    </location>
</feature>
<sequence length="101" mass="11258">MMLEHVLVLSAYLFSIGIYGLITSRNMVRALMCLELILNAVNINFVTFSDFFDSRQLKGNIFSIFVIAIAAAEAAIGPAIVSSIYRNRKSTRINQSNLLNK</sequence>
<evidence type="ECO:0000255" key="1">
    <source>
        <dbReference type="HAMAP-Rule" id="MF_01456"/>
    </source>
</evidence>
<proteinExistence type="inferred from homology"/>
<comment type="function">
    <text evidence="1">NDH shuttles electrons from NAD(P)H:plastoquinone, via FMN and iron-sulfur (Fe-S) centers, to quinones in the photosynthetic chain and possibly in a chloroplast respiratory chain. The immediate electron acceptor for the enzyme in this species is believed to be plastoquinone. Couples the redox reaction to proton translocation, and thus conserves the redox energy in a proton gradient.</text>
</comment>
<comment type="catalytic activity">
    <reaction evidence="1">
        <text>a plastoquinone + NADH + (n+1) H(+)(in) = a plastoquinol + NAD(+) + n H(+)(out)</text>
        <dbReference type="Rhea" id="RHEA:42608"/>
        <dbReference type="Rhea" id="RHEA-COMP:9561"/>
        <dbReference type="Rhea" id="RHEA-COMP:9562"/>
        <dbReference type="ChEBI" id="CHEBI:15378"/>
        <dbReference type="ChEBI" id="CHEBI:17757"/>
        <dbReference type="ChEBI" id="CHEBI:57540"/>
        <dbReference type="ChEBI" id="CHEBI:57945"/>
        <dbReference type="ChEBI" id="CHEBI:62192"/>
    </reaction>
</comment>
<comment type="catalytic activity">
    <reaction evidence="1">
        <text>a plastoquinone + NADPH + (n+1) H(+)(in) = a plastoquinol + NADP(+) + n H(+)(out)</text>
        <dbReference type="Rhea" id="RHEA:42612"/>
        <dbReference type="Rhea" id="RHEA-COMP:9561"/>
        <dbReference type="Rhea" id="RHEA-COMP:9562"/>
        <dbReference type="ChEBI" id="CHEBI:15378"/>
        <dbReference type="ChEBI" id="CHEBI:17757"/>
        <dbReference type="ChEBI" id="CHEBI:57783"/>
        <dbReference type="ChEBI" id="CHEBI:58349"/>
        <dbReference type="ChEBI" id="CHEBI:62192"/>
    </reaction>
</comment>
<comment type="subunit">
    <text evidence="1">NDH is composed of at least 16 different subunits, 5 of which are encoded in the nucleus.</text>
</comment>
<comment type="subcellular location">
    <subcellularLocation>
        <location evidence="1">Plastid</location>
        <location evidence="1">Chloroplast thylakoid membrane</location>
        <topology evidence="1">Multi-pass membrane protein</topology>
    </subcellularLocation>
</comment>
<comment type="similarity">
    <text evidence="1">Belongs to the complex I subunit 4L family.</text>
</comment>
<organism>
    <name type="scientific">Morus indica</name>
    <name type="common">Mulberry</name>
    <dbReference type="NCBI Taxonomy" id="248361"/>
    <lineage>
        <taxon>Eukaryota</taxon>
        <taxon>Viridiplantae</taxon>
        <taxon>Streptophyta</taxon>
        <taxon>Embryophyta</taxon>
        <taxon>Tracheophyta</taxon>
        <taxon>Spermatophyta</taxon>
        <taxon>Magnoliopsida</taxon>
        <taxon>eudicotyledons</taxon>
        <taxon>Gunneridae</taxon>
        <taxon>Pentapetalae</taxon>
        <taxon>rosids</taxon>
        <taxon>fabids</taxon>
        <taxon>Rosales</taxon>
        <taxon>Moraceae</taxon>
        <taxon>Moreae</taxon>
        <taxon>Morus</taxon>
    </lineage>
</organism>
<name>NU4LC_MORIN</name>
<reference key="1">
    <citation type="submission" date="2005-09" db="EMBL/GenBank/DDBJ databases">
        <title>The chloroplast genome of mulberry: structural features and comparative analysis.</title>
        <authorList>
            <person name="Ravi V."/>
            <person name="Khurana J.P."/>
            <person name="Tyagi A.K."/>
            <person name="Khurana P."/>
        </authorList>
    </citation>
    <scope>NUCLEOTIDE SEQUENCE [LARGE SCALE GENOMIC DNA]</scope>
    <source>
        <strain>cv. K2</strain>
    </source>
</reference>
<accession>Q09WW6</accession>
<dbReference type="EC" id="7.1.1.-" evidence="1"/>
<dbReference type="EMBL" id="DQ226511">
    <property type="protein sequence ID" value="ABB21008.1"/>
    <property type="molecule type" value="Genomic_DNA"/>
</dbReference>
<dbReference type="RefSeq" id="YP_762312.1">
    <property type="nucleotide sequence ID" value="NC_008359.1"/>
</dbReference>
<dbReference type="SMR" id="Q09WW6"/>
<dbReference type="GeneID" id="4290609"/>
<dbReference type="GO" id="GO:0009535">
    <property type="term" value="C:chloroplast thylakoid membrane"/>
    <property type="evidence" value="ECO:0007669"/>
    <property type="project" value="UniProtKB-SubCell"/>
</dbReference>
<dbReference type="GO" id="GO:0030964">
    <property type="term" value="C:NADH dehydrogenase complex"/>
    <property type="evidence" value="ECO:0007669"/>
    <property type="project" value="TreeGrafter"/>
</dbReference>
<dbReference type="GO" id="GO:0016655">
    <property type="term" value="F:oxidoreductase activity, acting on NAD(P)H, quinone or similar compound as acceptor"/>
    <property type="evidence" value="ECO:0007669"/>
    <property type="project" value="UniProtKB-UniRule"/>
</dbReference>
<dbReference type="GO" id="GO:0048038">
    <property type="term" value="F:quinone binding"/>
    <property type="evidence" value="ECO:0007669"/>
    <property type="project" value="UniProtKB-KW"/>
</dbReference>
<dbReference type="GO" id="GO:0042773">
    <property type="term" value="P:ATP synthesis coupled electron transport"/>
    <property type="evidence" value="ECO:0007669"/>
    <property type="project" value="InterPro"/>
</dbReference>
<dbReference type="GO" id="GO:0019684">
    <property type="term" value="P:photosynthesis, light reaction"/>
    <property type="evidence" value="ECO:0007669"/>
    <property type="project" value="UniProtKB-UniRule"/>
</dbReference>
<dbReference type="FunFam" id="1.10.287.3510:FF:000001">
    <property type="entry name" value="NADH-quinone oxidoreductase subunit K"/>
    <property type="match status" value="1"/>
</dbReference>
<dbReference type="Gene3D" id="1.10.287.3510">
    <property type="match status" value="1"/>
</dbReference>
<dbReference type="HAMAP" id="MF_01456">
    <property type="entry name" value="NDH1_NuoK"/>
    <property type="match status" value="1"/>
</dbReference>
<dbReference type="InterPro" id="IPR001133">
    <property type="entry name" value="NADH_UbQ_OxRdtase_chain4L/K"/>
</dbReference>
<dbReference type="InterPro" id="IPR039428">
    <property type="entry name" value="NUOK/Mnh_C1-like"/>
</dbReference>
<dbReference type="NCBIfam" id="NF004320">
    <property type="entry name" value="PRK05715.1-2"/>
    <property type="match status" value="1"/>
</dbReference>
<dbReference type="NCBIfam" id="NF004322">
    <property type="entry name" value="PRK05715.1-4"/>
    <property type="match status" value="1"/>
</dbReference>
<dbReference type="NCBIfam" id="NF004323">
    <property type="entry name" value="PRK05715.1-5"/>
    <property type="match status" value="1"/>
</dbReference>
<dbReference type="PANTHER" id="PTHR11434:SF16">
    <property type="entry name" value="NADH-UBIQUINONE OXIDOREDUCTASE CHAIN 4L"/>
    <property type="match status" value="1"/>
</dbReference>
<dbReference type="PANTHER" id="PTHR11434">
    <property type="entry name" value="NADH-UBIQUINONE OXIDOREDUCTASE SUBUNIT ND4L"/>
    <property type="match status" value="1"/>
</dbReference>
<dbReference type="Pfam" id="PF00420">
    <property type="entry name" value="Oxidored_q2"/>
    <property type="match status" value="1"/>
</dbReference>
<keyword id="KW-0150">Chloroplast</keyword>
<keyword id="KW-0472">Membrane</keyword>
<keyword id="KW-0520">NAD</keyword>
<keyword id="KW-0521">NADP</keyword>
<keyword id="KW-0934">Plastid</keyword>
<keyword id="KW-0618">Plastoquinone</keyword>
<keyword id="KW-0874">Quinone</keyword>
<keyword id="KW-0793">Thylakoid</keyword>
<keyword id="KW-1278">Translocase</keyword>
<keyword id="KW-0812">Transmembrane</keyword>
<keyword id="KW-1133">Transmembrane helix</keyword>
<keyword id="KW-0813">Transport</keyword>